<reference evidence="4" key="1">
    <citation type="journal article" date="2002" name="Science">
        <title>The genome sequence of the malaria mosquito Anopheles gambiae.</title>
        <authorList>
            <person name="Holt R.A."/>
            <person name="Subramanian G.M."/>
            <person name="Halpern A."/>
            <person name="Sutton G.G."/>
            <person name="Charlab R."/>
            <person name="Nusskern D.R."/>
            <person name="Wincker P."/>
            <person name="Clark A.G."/>
            <person name="Ribeiro J.M.C."/>
            <person name="Wides R."/>
            <person name="Salzberg S.L."/>
            <person name="Loftus B.J."/>
            <person name="Yandell M.D."/>
            <person name="Majoros W.H."/>
            <person name="Rusch D.B."/>
            <person name="Lai Z."/>
            <person name="Kraft C.L."/>
            <person name="Abril J.F."/>
            <person name="Anthouard V."/>
            <person name="Arensburger P."/>
            <person name="Atkinson P.W."/>
            <person name="Baden H."/>
            <person name="de Berardinis V."/>
            <person name="Baldwin D."/>
            <person name="Benes V."/>
            <person name="Biedler J."/>
            <person name="Blass C."/>
            <person name="Bolanos R."/>
            <person name="Boscus D."/>
            <person name="Barnstead M."/>
            <person name="Cai S."/>
            <person name="Center A."/>
            <person name="Chaturverdi K."/>
            <person name="Christophides G.K."/>
            <person name="Chrystal M.A.M."/>
            <person name="Clamp M."/>
            <person name="Cravchik A."/>
            <person name="Curwen V."/>
            <person name="Dana A."/>
            <person name="Delcher A."/>
            <person name="Dew I."/>
            <person name="Evans C.A."/>
            <person name="Flanigan M."/>
            <person name="Grundschober-Freimoser A."/>
            <person name="Friedli L."/>
            <person name="Gu Z."/>
            <person name="Guan P."/>
            <person name="Guigo R."/>
            <person name="Hillenmeyer M.E."/>
            <person name="Hladun S.L."/>
            <person name="Hogan J.R."/>
            <person name="Hong Y.S."/>
            <person name="Hoover J."/>
            <person name="Jaillon O."/>
            <person name="Ke Z."/>
            <person name="Kodira C.D."/>
            <person name="Kokoza E."/>
            <person name="Koutsos A."/>
            <person name="Letunic I."/>
            <person name="Levitsky A.A."/>
            <person name="Liang Y."/>
            <person name="Lin J.-J."/>
            <person name="Lobo N.F."/>
            <person name="Lopez J.R."/>
            <person name="Malek J.A."/>
            <person name="McIntosh T.C."/>
            <person name="Meister S."/>
            <person name="Miller J.R."/>
            <person name="Mobarry C."/>
            <person name="Mongin E."/>
            <person name="Murphy S.D."/>
            <person name="O'Brochta D.A."/>
            <person name="Pfannkoch C."/>
            <person name="Qi R."/>
            <person name="Regier M.A."/>
            <person name="Remington K."/>
            <person name="Shao H."/>
            <person name="Sharakhova M.V."/>
            <person name="Sitter C.D."/>
            <person name="Shetty J."/>
            <person name="Smith T.J."/>
            <person name="Strong R."/>
            <person name="Sun J."/>
            <person name="Thomasova D."/>
            <person name="Ton L.Q."/>
            <person name="Topalis P."/>
            <person name="Tu Z.J."/>
            <person name="Unger M.F."/>
            <person name="Walenz B."/>
            <person name="Wang A.H."/>
            <person name="Wang J."/>
            <person name="Wang M."/>
            <person name="Wang X."/>
            <person name="Woodford K.J."/>
            <person name="Wortman J.R."/>
            <person name="Wu M."/>
            <person name="Yao A."/>
            <person name="Zdobnov E.M."/>
            <person name="Zhang H."/>
            <person name="Zhao Q."/>
            <person name="Zhao S."/>
            <person name="Zhu S.C."/>
            <person name="Zhimulev I."/>
            <person name="Coluzzi M."/>
            <person name="della Torre A."/>
            <person name="Roth C.W."/>
            <person name="Louis C."/>
            <person name="Kalush F."/>
            <person name="Mural R.J."/>
            <person name="Myers E.W."/>
            <person name="Adams M.D."/>
            <person name="Smith H.O."/>
            <person name="Broder S."/>
            <person name="Gardner M.J."/>
            <person name="Fraser C.M."/>
            <person name="Birney E."/>
            <person name="Bork P."/>
            <person name="Brey P.T."/>
            <person name="Venter J.C."/>
            <person name="Weissenbach J."/>
            <person name="Kafatos F.C."/>
            <person name="Collins F.H."/>
            <person name="Hoffman S.L."/>
        </authorList>
    </citation>
    <scope>NUCLEOTIDE SEQUENCE [LARGE SCALE GENOMIC DNA]</scope>
    <source>
        <strain evidence="4">PEST</strain>
    </source>
</reference>
<dbReference type="EMBL" id="AAAB01008964">
    <property type="protein sequence ID" value="EAA12665.2"/>
    <property type="molecule type" value="Genomic_DNA"/>
</dbReference>
<dbReference type="SMR" id="Q7PN68"/>
<dbReference type="FunCoup" id="Q7PN68">
    <property type="interactions" value="1"/>
</dbReference>
<dbReference type="STRING" id="7165.Q7PN68"/>
<dbReference type="PaxDb" id="7165-AGAP007974-PA"/>
<dbReference type="EnsemblMetazoa" id="AGAP007974-RA">
    <property type="protein sequence ID" value="AGAP007974-PA"/>
    <property type="gene ID" value="AGAP007974"/>
</dbReference>
<dbReference type="GeneID" id="1277975"/>
<dbReference type="KEGG" id="aga:1277975"/>
<dbReference type="CTD" id="49638"/>
<dbReference type="VEuPathDB" id="VectorBase:AGAMI1_011666"/>
<dbReference type="VEuPathDB" id="VectorBase:AGAP007974"/>
<dbReference type="eggNOG" id="KOG1721">
    <property type="taxonomic scope" value="Eukaryota"/>
</dbReference>
<dbReference type="HOGENOM" id="CLU_2576967_0_0_1"/>
<dbReference type="InParanoid" id="Q7PN68"/>
<dbReference type="OMA" id="RTHKDDV"/>
<dbReference type="PhylomeDB" id="Q7PN68"/>
<dbReference type="Proteomes" id="UP000007062">
    <property type="component" value="Chromosome 3R"/>
</dbReference>
<dbReference type="GO" id="GO:0005634">
    <property type="term" value="C:nucleus"/>
    <property type="evidence" value="ECO:0007669"/>
    <property type="project" value="UniProtKB-SubCell"/>
</dbReference>
<dbReference type="GO" id="GO:0003677">
    <property type="term" value="F:DNA binding"/>
    <property type="evidence" value="ECO:0007669"/>
    <property type="project" value="UniProtKB-KW"/>
</dbReference>
<dbReference type="GO" id="GO:0008270">
    <property type="term" value="F:zinc ion binding"/>
    <property type="evidence" value="ECO:0007669"/>
    <property type="project" value="UniProtKB-KW"/>
</dbReference>
<dbReference type="GO" id="GO:0007366">
    <property type="term" value="P:periodic partitioning by pair rule gene"/>
    <property type="evidence" value="ECO:0007669"/>
    <property type="project" value="UniProtKB-KW"/>
</dbReference>
<dbReference type="FunFam" id="3.30.160.60:FF:001793">
    <property type="entry name" value="Blast:Protein drumstick"/>
    <property type="match status" value="1"/>
</dbReference>
<dbReference type="FunFam" id="3.30.160.60:FF:000712">
    <property type="entry name" value="Drumstick, isoform C"/>
    <property type="match status" value="1"/>
</dbReference>
<dbReference type="Gene3D" id="3.30.160.60">
    <property type="entry name" value="Classic Zinc Finger"/>
    <property type="match status" value="2"/>
</dbReference>
<dbReference type="InterPro" id="IPR050717">
    <property type="entry name" value="C2H2-ZF_Transcription_Reg"/>
</dbReference>
<dbReference type="InterPro" id="IPR036236">
    <property type="entry name" value="Znf_C2H2_sf"/>
</dbReference>
<dbReference type="InterPro" id="IPR013087">
    <property type="entry name" value="Znf_C2H2_type"/>
</dbReference>
<dbReference type="PANTHER" id="PTHR14196">
    <property type="entry name" value="ODD-SKIPPED - RELATED"/>
    <property type="match status" value="1"/>
</dbReference>
<dbReference type="PANTHER" id="PTHR14196:SF0">
    <property type="entry name" value="PROTEIN BOWEL"/>
    <property type="match status" value="1"/>
</dbReference>
<dbReference type="Pfam" id="PF00096">
    <property type="entry name" value="zf-C2H2"/>
    <property type="match status" value="2"/>
</dbReference>
<dbReference type="SMART" id="SM00355">
    <property type="entry name" value="ZnF_C2H2"/>
    <property type="match status" value="2"/>
</dbReference>
<dbReference type="SUPFAM" id="SSF57667">
    <property type="entry name" value="beta-beta-alpha zinc fingers"/>
    <property type="match status" value="1"/>
</dbReference>
<dbReference type="PROSITE" id="PS00028">
    <property type="entry name" value="ZINC_FINGER_C2H2_1"/>
    <property type="match status" value="1"/>
</dbReference>
<dbReference type="PROSITE" id="PS50157">
    <property type="entry name" value="ZINC_FINGER_C2H2_2"/>
    <property type="match status" value="2"/>
</dbReference>
<keyword id="KW-0217">Developmental protein</keyword>
<keyword id="KW-0238">DNA-binding</keyword>
<keyword id="KW-0479">Metal-binding</keyword>
<keyword id="KW-0539">Nucleus</keyword>
<keyword id="KW-0562">Pair-rule protein</keyword>
<keyword id="KW-1185">Reference proteome</keyword>
<keyword id="KW-0677">Repeat</keyword>
<keyword id="KW-0804">Transcription</keyword>
<keyword id="KW-0805">Transcription regulation</keyword>
<keyword id="KW-0862">Zinc</keyword>
<keyword id="KW-0863">Zinc-finger</keyword>
<comment type="function">
    <text evidence="1">Putative transcription factor. May function redundantly with odd and sob in leg joint formation during the larval stages, acting downstream of Notch activation (By similarity).</text>
</comment>
<comment type="subcellular location">
    <subcellularLocation>
        <location evidence="2">Nucleus</location>
    </subcellularLocation>
</comment>
<organism>
    <name type="scientific">Anopheles gambiae</name>
    <name type="common">African malaria mosquito</name>
    <dbReference type="NCBI Taxonomy" id="7165"/>
    <lineage>
        <taxon>Eukaryota</taxon>
        <taxon>Metazoa</taxon>
        <taxon>Ecdysozoa</taxon>
        <taxon>Arthropoda</taxon>
        <taxon>Hexapoda</taxon>
        <taxon>Insecta</taxon>
        <taxon>Pterygota</taxon>
        <taxon>Neoptera</taxon>
        <taxon>Endopterygota</taxon>
        <taxon>Diptera</taxon>
        <taxon>Nematocera</taxon>
        <taxon>Culicoidea</taxon>
        <taxon>Culicidae</taxon>
        <taxon>Anophelinae</taxon>
        <taxon>Anopheles</taxon>
    </lineage>
</organism>
<evidence type="ECO:0000250" key="1"/>
<evidence type="ECO:0000250" key="2">
    <source>
        <dbReference type="UniProtKB" id="Q9VQS6"/>
    </source>
</evidence>
<evidence type="ECO:0000255" key="3">
    <source>
        <dbReference type="PROSITE-ProRule" id="PRU00042"/>
    </source>
</evidence>
<evidence type="ECO:0000312" key="4">
    <source>
        <dbReference type="EMBL" id="EAA12665.2"/>
    </source>
</evidence>
<feature type="chain" id="PRO_0000232397" description="Protein drumstick">
    <location>
        <begin position="1"/>
        <end position="81"/>
    </location>
</feature>
<feature type="zinc finger region" description="C2H2-type 1" evidence="3">
    <location>
        <begin position="26"/>
        <end position="48"/>
    </location>
</feature>
<feature type="zinc finger region" description="C2H2-type 2; degenerate" evidence="3">
    <location>
        <begin position="55"/>
        <end position="75"/>
    </location>
</feature>
<sequence>MFAVMRIDNDDRRADFRRKMRPKCEFVCKYCQRRFTKPYNLMIHERTHKSPEVTFSCEVCGKYFKRQDNLRSHRCSQCIWR</sequence>
<gene>
    <name evidence="2" type="primary">drm</name>
    <name type="ORF">AGAP007974</name>
</gene>
<name>DRM_ANOGA</name>
<proteinExistence type="inferred from homology"/>
<accession>Q7PN68</accession>
<protein>
    <recommendedName>
        <fullName>Protein drumstick</fullName>
    </recommendedName>
</protein>